<protein>
    <recommendedName>
        <fullName>6-phosphofructo-2-kinase/fructose-2,6-bisphosphatase 4</fullName>
        <shortName>6PF-2-K/Fru-2,6-P2ase 4</shortName>
        <shortName>PFK/FBPase 4</shortName>
    </recommendedName>
    <alternativeName>
        <fullName>6PF-2-K/Fru-2,6-P2ase testis-type isozyme</fullName>
    </alternativeName>
    <domain>
        <recommendedName>
            <fullName>6-phosphofructo-2-kinase</fullName>
            <ecNumber>2.7.1.105</ecNumber>
        </recommendedName>
    </domain>
    <domain>
        <recommendedName>
            <fullName>Fructose-2,6-bisphosphatase</fullName>
            <ecNumber>3.1.3.46</ecNumber>
        </recommendedName>
    </domain>
</protein>
<comment type="function">
    <text evidence="1">Synthesis and degradation of fructose 2,6-bisphosphate.</text>
</comment>
<comment type="catalytic activity">
    <reaction>
        <text>beta-D-fructose 2,6-bisphosphate + H2O = beta-D-fructose 6-phosphate + phosphate</text>
        <dbReference type="Rhea" id="RHEA:17289"/>
        <dbReference type="ChEBI" id="CHEBI:15377"/>
        <dbReference type="ChEBI" id="CHEBI:43474"/>
        <dbReference type="ChEBI" id="CHEBI:57634"/>
        <dbReference type="ChEBI" id="CHEBI:58579"/>
        <dbReference type="EC" id="3.1.3.46"/>
    </reaction>
</comment>
<comment type="catalytic activity">
    <reaction>
        <text>beta-D-fructose 6-phosphate + ATP = beta-D-fructose 2,6-bisphosphate + ADP + H(+)</text>
        <dbReference type="Rhea" id="RHEA:15653"/>
        <dbReference type="ChEBI" id="CHEBI:15378"/>
        <dbReference type="ChEBI" id="CHEBI:30616"/>
        <dbReference type="ChEBI" id="CHEBI:57634"/>
        <dbReference type="ChEBI" id="CHEBI:58579"/>
        <dbReference type="ChEBI" id="CHEBI:456216"/>
        <dbReference type="EC" id="2.7.1.105"/>
    </reaction>
</comment>
<comment type="activity regulation">
    <text evidence="1">The most important regulatory mechanism of these opposing activities is by phosphorylation and dephosphorylation of the enzyme.</text>
</comment>
<comment type="subunit">
    <text evidence="1">Homodimer.</text>
</comment>
<comment type="similarity">
    <text evidence="6">In the C-terminal section; belongs to the phosphoglycerate mutase family.</text>
</comment>
<sequence length="469" mass="54071">MASPRELTQNPLKKIWMPYSNGRPALHACQRGVCMTNCPTLIVMVGLPARGKTYISKKLTRYLNWIGVPTREFNVGQYRRNMVKTYKSFEFFLPDNEEGLKIRKQCALAALRDVRRFLSEEGGHVAVFDATNTTRERRATIFNFGEQNGYKTFFVESICVDPEVIAANIVQVKLGSPDYVNRDSDEATEDFMRRIECYENSYESLDEDLDRDLSYIKIMDVGQSYVVNRVADHIQSRIVYYLMNIHVTPRSIYLCRHGESELNLKGRIGGDPGLSPRGREFAKSLAQFISDQNIKDLKVWTSQMKRTIQTAEALGVPYEQWKVLNEIDAGVCEEMTYEEIQDNYPLEFALRDQDKYRYRYPKGESYEDLVQRLEPVIMELERQENVLVICHQAVMRCLLAYFLDKAAEQLPYLKCPLHTVLKLTPVAYGCKVESIFLNVAAVNTHRDRPQNVDISRPPEEALVTVPAHQ</sequence>
<accession>Q4R8B6</accession>
<reference key="1">
    <citation type="submission" date="2005-06" db="EMBL/GenBank/DDBJ databases">
        <title>DNA sequences of macaque genes expressed in brain or testis and its evolutionary implications.</title>
        <authorList>
            <consortium name="International consortium for macaque cDNA sequencing and analysis"/>
        </authorList>
    </citation>
    <scope>NUCLEOTIDE SEQUENCE [LARGE SCALE MRNA]</scope>
    <source>
        <tissue>Testis</tissue>
    </source>
</reference>
<name>F264_MACFA</name>
<feature type="chain" id="PRO_0000268186" description="6-phosphofructo-2-kinase/fructose-2,6-bisphosphatase 4">
    <location>
        <begin position="1"/>
        <end position="469"/>
    </location>
</feature>
<feature type="region of interest" description="6-phosphofructo-2-kinase">
    <location>
        <begin position="1"/>
        <end position="249"/>
    </location>
</feature>
<feature type="region of interest" description="Fructose-2,6-bisphosphatase">
    <location>
        <begin position="250"/>
        <end position="469"/>
    </location>
</feature>
<feature type="active site" evidence="5">
    <location>
        <position position="129"/>
    </location>
</feature>
<feature type="active site" evidence="5">
    <location>
        <position position="159"/>
    </location>
</feature>
<feature type="active site" description="Tele-phosphohistidine intermediate" evidence="3">
    <location>
        <position position="257"/>
    </location>
</feature>
<feature type="active site" description="Proton donor/acceptor" evidence="3">
    <location>
        <position position="326"/>
    </location>
</feature>
<feature type="binding site" evidence="4">
    <location>
        <begin position="46"/>
        <end position="54"/>
    </location>
    <ligand>
        <name>ATP</name>
        <dbReference type="ChEBI" id="CHEBI:30616"/>
    </ligand>
</feature>
<feature type="binding site" evidence="4">
    <location>
        <position position="79"/>
    </location>
    <ligand>
        <name>beta-D-fructose 6-phosphate</name>
        <dbReference type="ChEBI" id="CHEBI:57634"/>
    </ligand>
</feature>
<feature type="binding site" evidence="4">
    <location>
        <position position="103"/>
    </location>
    <ligand>
        <name>beta-D-fructose 6-phosphate</name>
        <dbReference type="ChEBI" id="CHEBI:57634"/>
    </ligand>
</feature>
<feature type="binding site" evidence="4">
    <location>
        <position position="131"/>
    </location>
    <ligand>
        <name>beta-D-fructose 6-phosphate</name>
        <dbReference type="ChEBI" id="CHEBI:57634"/>
    </ligand>
</feature>
<feature type="binding site" evidence="4">
    <location>
        <position position="137"/>
    </location>
    <ligand>
        <name>beta-D-fructose 6-phosphate</name>
        <dbReference type="ChEBI" id="CHEBI:57634"/>
    </ligand>
</feature>
<feature type="binding site" evidence="4">
    <location>
        <begin position="168"/>
        <end position="173"/>
    </location>
    <ligand>
        <name>ATP</name>
        <dbReference type="ChEBI" id="CHEBI:30616"/>
    </ligand>
</feature>
<feature type="binding site" evidence="4">
    <location>
        <position position="173"/>
    </location>
    <ligand>
        <name>beta-D-fructose 6-phosphate</name>
        <dbReference type="ChEBI" id="CHEBI:57634"/>
    </ligand>
</feature>
<feature type="binding site" evidence="4">
    <location>
        <position position="194"/>
    </location>
    <ligand>
        <name>beta-D-fructose 6-phosphate</name>
        <dbReference type="ChEBI" id="CHEBI:57634"/>
    </ligand>
</feature>
<feature type="binding site" evidence="4">
    <location>
        <position position="198"/>
    </location>
    <ligand>
        <name>beta-D-fructose 6-phosphate</name>
        <dbReference type="ChEBI" id="CHEBI:57634"/>
    </ligand>
</feature>
<feature type="binding site" evidence="4">
    <location>
        <position position="256"/>
    </location>
    <ligand>
        <name>beta-D-fructose 2,6-bisphosphate</name>
        <dbReference type="ChEBI" id="CHEBI:58579"/>
    </ligand>
</feature>
<feature type="binding site" evidence="4">
    <location>
        <position position="263"/>
    </location>
    <ligand>
        <name>beta-D-fructose 2,6-bisphosphate</name>
        <dbReference type="ChEBI" id="CHEBI:58579"/>
    </ligand>
</feature>
<feature type="binding site" evidence="3">
    <location>
        <position position="269"/>
    </location>
    <ligand>
        <name>beta-D-fructose 2,6-bisphosphate</name>
        <dbReference type="ChEBI" id="CHEBI:58579"/>
    </ligand>
</feature>
<feature type="binding site" evidence="4">
    <location>
        <position position="306"/>
    </location>
    <ligand>
        <name>beta-D-fructose 2,6-bisphosphate</name>
        <dbReference type="ChEBI" id="CHEBI:58579"/>
    </ligand>
</feature>
<feature type="binding site" evidence="3">
    <location>
        <position position="337"/>
    </location>
    <ligand>
        <name>beta-D-fructose 2,6-bisphosphate</name>
        <dbReference type="ChEBI" id="CHEBI:58579"/>
    </ligand>
</feature>
<feature type="binding site" evidence="3">
    <location>
        <begin position="348"/>
        <end position="351"/>
    </location>
    <ligand>
        <name>ATP</name>
        <dbReference type="ChEBI" id="CHEBI:30616"/>
    </ligand>
</feature>
<feature type="binding site" evidence="3">
    <location>
        <position position="351"/>
    </location>
    <ligand>
        <name>beta-D-fructose 2,6-bisphosphate</name>
        <dbReference type="ChEBI" id="CHEBI:58579"/>
    </ligand>
</feature>
<feature type="binding site" evidence="3">
    <location>
        <position position="355"/>
    </location>
    <ligand>
        <name>beta-D-fructose 2,6-bisphosphate</name>
        <dbReference type="ChEBI" id="CHEBI:58579"/>
    </ligand>
</feature>
<feature type="binding site" evidence="3">
    <location>
        <position position="366"/>
    </location>
    <ligand>
        <name>beta-D-fructose 2,6-bisphosphate</name>
        <dbReference type="ChEBI" id="CHEBI:58579"/>
    </ligand>
</feature>
<feature type="binding site" evidence="3">
    <location>
        <begin position="392"/>
        <end position="396"/>
    </location>
    <ligand>
        <name>ATP</name>
        <dbReference type="ChEBI" id="CHEBI:30616"/>
    </ligand>
</feature>
<feature type="binding site" evidence="3">
    <location>
        <position position="392"/>
    </location>
    <ligand>
        <name>beta-D-fructose 2,6-bisphosphate</name>
        <dbReference type="ChEBI" id="CHEBI:58579"/>
    </ligand>
</feature>
<feature type="binding site" evidence="3">
    <location>
        <position position="396"/>
    </location>
    <ligand>
        <name>beta-D-fructose 2,6-bisphosphate</name>
        <dbReference type="ChEBI" id="CHEBI:58579"/>
    </ligand>
</feature>
<feature type="binding site" evidence="4">
    <location>
        <position position="428"/>
    </location>
    <ligand>
        <name>ATP</name>
        <dbReference type="ChEBI" id="CHEBI:30616"/>
    </ligand>
</feature>
<feature type="site" description="Transition state stabilizer" evidence="2">
    <location>
        <position position="391"/>
    </location>
</feature>
<feature type="modified residue" description="Phosphothreonine; by PKC" evidence="5">
    <location>
        <position position="444"/>
    </location>
</feature>
<proteinExistence type="evidence at transcript level"/>
<evidence type="ECO:0000250" key="1"/>
<evidence type="ECO:0000250" key="2">
    <source>
        <dbReference type="UniProtKB" id="P00950"/>
    </source>
</evidence>
<evidence type="ECO:0000250" key="3">
    <source>
        <dbReference type="UniProtKB" id="P07953"/>
    </source>
</evidence>
<evidence type="ECO:0000250" key="4">
    <source>
        <dbReference type="UniProtKB" id="Q16875"/>
    </source>
</evidence>
<evidence type="ECO:0000255" key="5"/>
<evidence type="ECO:0000305" key="6"/>
<dbReference type="EC" id="2.7.1.105"/>
<dbReference type="EC" id="3.1.3.46"/>
<dbReference type="EMBL" id="AB168541">
    <property type="protein sequence ID" value="BAE00656.1"/>
    <property type="molecule type" value="mRNA"/>
</dbReference>
<dbReference type="RefSeq" id="NP_001270781.1">
    <property type="nucleotide sequence ID" value="NM_001283852.1"/>
</dbReference>
<dbReference type="RefSeq" id="XP_045242222.1">
    <property type="nucleotide sequence ID" value="XM_045386287.2"/>
</dbReference>
<dbReference type="SMR" id="Q4R8B6"/>
<dbReference type="STRING" id="9541.ENSMFAP00000003658"/>
<dbReference type="Ensembl" id="ENSMFAT00000022319.2">
    <property type="protein sequence ID" value="ENSMFAP00000003658.1"/>
    <property type="gene ID" value="ENSMFAG00000001535.2"/>
</dbReference>
<dbReference type="GeneID" id="101925992"/>
<dbReference type="VEuPathDB" id="HostDB:ENSMFAG00000001535"/>
<dbReference type="eggNOG" id="KOG0234">
    <property type="taxonomic scope" value="Eukaryota"/>
</dbReference>
<dbReference type="GeneTree" id="ENSGT00950000182835"/>
<dbReference type="OMA" id="GECYGMT"/>
<dbReference type="Proteomes" id="UP000233100">
    <property type="component" value="Chromosome 2"/>
</dbReference>
<dbReference type="Bgee" id="ENSMFAG00000001535">
    <property type="expression patterns" value="Expressed in bone marrow and 13 other cell types or tissues"/>
</dbReference>
<dbReference type="GO" id="GO:0005829">
    <property type="term" value="C:cytosol"/>
    <property type="evidence" value="ECO:0007669"/>
    <property type="project" value="TreeGrafter"/>
</dbReference>
<dbReference type="GO" id="GO:0003873">
    <property type="term" value="F:6-phosphofructo-2-kinase activity"/>
    <property type="evidence" value="ECO:0007669"/>
    <property type="project" value="UniProtKB-EC"/>
</dbReference>
<dbReference type="GO" id="GO:0005524">
    <property type="term" value="F:ATP binding"/>
    <property type="evidence" value="ECO:0007669"/>
    <property type="project" value="UniProtKB-KW"/>
</dbReference>
<dbReference type="GO" id="GO:0004331">
    <property type="term" value="F:fructose-2,6-bisphosphate 2-phosphatase activity"/>
    <property type="evidence" value="ECO:0007669"/>
    <property type="project" value="UniProtKB-EC"/>
</dbReference>
<dbReference type="GO" id="GO:0006003">
    <property type="term" value="P:fructose 2,6-bisphosphate metabolic process"/>
    <property type="evidence" value="ECO:0007669"/>
    <property type="project" value="InterPro"/>
</dbReference>
<dbReference type="GO" id="GO:0006000">
    <property type="term" value="P:fructose metabolic process"/>
    <property type="evidence" value="ECO:0007669"/>
    <property type="project" value="InterPro"/>
</dbReference>
<dbReference type="CDD" id="cd07067">
    <property type="entry name" value="HP_PGM_like"/>
    <property type="match status" value="1"/>
</dbReference>
<dbReference type="FunFam" id="3.40.50.1240:FF:000001">
    <property type="entry name" value="6-phosphofructo-2-kinase/fructose-2, 6-bisphosphatase 3 isoform 2"/>
    <property type="match status" value="1"/>
</dbReference>
<dbReference type="FunFam" id="3.40.50.300:FF:000047">
    <property type="entry name" value="6-phosphofructo-2-kinase/fructose-2, 6-bisphosphatase 3 isoform 2"/>
    <property type="match status" value="1"/>
</dbReference>
<dbReference type="Gene3D" id="3.40.50.300">
    <property type="entry name" value="P-loop containing nucleotide triphosphate hydrolases"/>
    <property type="match status" value="1"/>
</dbReference>
<dbReference type="Gene3D" id="3.40.50.1240">
    <property type="entry name" value="Phosphoglycerate mutase-like"/>
    <property type="match status" value="1"/>
</dbReference>
<dbReference type="InterPro" id="IPR003094">
    <property type="entry name" value="6Pfruct_kin"/>
</dbReference>
<dbReference type="InterPro" id="IPR013079">
    <property type="entry name" value="6Phosfructo_kin"/>
</dbReference>
<dbReference type="InterPro" id="IPR013078">
    <property type="entry name" value="His_Pase_superF_clade-1"/>
</dbReference>
<dbReference type="InterPro" id="IPR029033">
    <property type="entry name" value="His_PPase_superfam"/>
</dbReference>
<dbReference type="InterPro" id="IPR027417">
    <property type="entry name" value="P-loop_NTPase"/>
</dbReference>
<dbReference type="InterPro" id="IPR001345">
    <property type="entry name" value="PG/BPGM_mutase_AS"/>
</dbReference>
<dbReference type="PANTHER" id="PTHR10606">
    <property type="entry name" value="6-PHOSPHOFRUCTO-2-KINASE/FRUCTOSE-2,6-BISPHOSPHATASE"/>
    <property type="match status" value="1"/>
</dbReference>
<dbReference type="PANTHER" id="PTHR10606:SF14">
    <property type="entry name" value="6-PHOSPHOFRUCTO-2-KINASE_FRUCTOSE-2,6-BISPHOSPHATASE 4"/>
    <property type="match status" value="1"/>
</dbReference>
<dbReference type="Pfam" id="PF01591">
    <property type="entry name" value="6PF2K"/>
    <property type="match status" value="1"/>
</dbReference>
<dbReference type="Pfam" id="PF00300">
    <property type="entry name" value="His_Phos_1"/>
    <property type="match status" value="1"/>
</dbReference>
<dbReference type="PIRSF" id="PIRSF000709">
    <property type="entry name" value="6PFK_2-Ptase"/>
    <property type="match status" value="1"/>
</dbReference>
<dbReference type="PRINTS" id="PR00991">
    <property type="entry name" value="6PFRUCTKNASE"/>
</dbReference>
<dbReference type="SMART" id="SM00855">
    <property type="entry name" value="PGAM"/>
    <property type="match status" value="1"/>
</dbReference>
<dbReference type="SUPFAM" id="SSF52540">
    <property type="entry name" value="P-loop containing nucleoside triphosphate hydrolases"/>
    <property type="match status" value="1"/>
</dbReference>
<dbReference type="SUPFAM" id="SSF53254">
    <property type="entry name" value="Phosphoglycerate mutase-like"/>
    <property type="match status" value="1"/>
</dbReference>
<dbReference type="PROSITE" id="PS00175">
    <property type="entry name" value="PG_MUTASE"/>
    <property type="match status" value="1"/>
</dbReference>
<keyword id="KW-0067">ATP-binding</keyword>
<keyword id="KW-0378">Hydrolase</keyword>
<keyword id="KW-0418">Kinase</keyword>
<keyword id="KW-0511">Multifunctional enzyme</keyword>
<keyword id="KW-0547">Nucleotide-binding</keyword>
<keyword id="KW-0597">Phosphoprotein</keyword>
<keyword id="KW-1185">Reference proteome</keyword>
<keyword id="KW-0808">Transferase</keyword>
<gene>
    <name type="primary">PFKFB4</name>
    <name type="ORF">QtsA-12874</name>
</gene>
<organism>
    <name type="scientific">Macaca fascicularis</name>
    <name type="common">Crab-eating macaque</name>
    <name type="synonym">Cynomolgus monkey</name>
    <dbReference type="NCBI Taxonomy" id="9541"/>
    <lineage>
        <taxon>Eukaryota</taxon>
        <taxon>Metazoa</taxon>
        <taxon>Chordata</taxon>
        <taxon>Craniata</taxon>
        <taxon>Vertebrata</taxon>
        <taxon>Euteleostomi</taxon>
        <taxon>Mammalia</taxon>
        <taxon>Eutheria</taxon>
        <taxon>Euarchontoglires</taxon>
        <taxon>Primates</taxon>
        <taxon>Haplorrhini</taxon>
        <taxon>Catarrhini</taxon>
        <taxon>Cercopithecidae</taxon>
        <taxon>Cercopithecinae</taxon>
        <taxon>Macaca</taxon>
    </lineage>
</organism>